<name>AUGN_MOUSE</name>
<keyword id="KW-1003">Cell membrane</keyword>
<keyword id="KW-0165">Cleavage on pair of basic residues</keyword>
<keyword id="KW-0963">Cytoplasm</keyword>
<keyword id="KW-0472">Membrane</keyword>
<keyword id="KW-1185">Reference proteome</keyword>
<keyword id="KW-0964">Secreted</keyword>
<keyword id="KW-0732">Signal</keyword>
<reference key="1">
    <citation type="journal article" date="2005" name="Science">
        <title>The transcriptional landscape of the mammalian genome.</title>
        <authorList>
            <person name="Carninci P."/>
            <person name="Kasukawa T."/>
            <person name="Katayama S."/>
            <person name="Gough J."/>
            <person name="Frith M.C."/>
            <person name="Maeda N."/>
            <person name="Oyama R."/>
            <person name="Ravasi T."/>
            <person name="Lenhard B."/>
            <person name="Wells C."/>
            <person name="Kodzius R."/>
            <person name="Shimokawa K."/>
            <person name="Bajic V.B."/>
            <person name="Brenner S.E."/>
            <person name="Batalov S."/>
            <person name="Forrest A.R."/>
            <person name="Zavolan M."/>
            <person name="Davis M.J."/>
            <person name="Wilming L.G."/>
            <person name="Aidinis V."/>
            <person name="Allen J.E."/>
            <person name="Ambesi-Impiombato A."/>
            <person name="Apweiler R."/>
            <person name="Aturaliya R.N."/>
            <person name="Bailey T.L."/>
            <person name="Bansal M."/>
            <person name="Baxter L."/>
            <person name="Beisel K.W."/>
            <person name="Bersano T."/>
            <person name="Bono H."/>
            <person name="Chalk A.M."/>
            <person name="Chiu K.P."/>
            <person name="Choudhary V."/>
            <person name="Christoffels A."/>
            <person name="Clutterbuck D.R."/>
            <person name="Crowe M.L."/>
            <person name="Dalla E."/>
            <person name="Dalrymple B.P."/>
            <person name="de Bono B."/>
            <person name="Della Gatta G."/>
            <person name="di Bernardo D."/>
            <person name="Down T."/>
            <person name="Engstrom P."/>
            <person name="Fagiolini M."/>
            <person name="Faulkner G."/>
            <person name="Fletcher C.F."/>
            <person name="Fukushima T."/>
            <person name="Furuno M."/>
            <person name="Futaki S."/>
            <person name="Gariboldi M."/>
            <person name="Georgii-Hemming P."/>
            <person name="Gingeras T.R."/>
            <person name="Gojobori T."/>
            <person name="Green R.E."/>
            <person name="Gustincich S."/>
            <person name="Harbers M."/>
            <person name="Hayashi Y."/>
            <person name="Hensch T.K."/>
            <person name="Hirokawa N."/>
            <person name="Hill D."/>
            <person name="Huminiecki L."/>
            <person name="Iacono M."/>
            <person name="Ikeo K."/>
            <person name="Iwama A."/>
            <person name="Ishikawa T."/>
            <person name="Jakt M."/>
            <person name="Kanapin A."/>
            <person name="Katoh M."/>
            <person name="Kawasawa Y."/>
            <person name="Kelso J."/>
            <person name="Kitamura H."/>
            <person name="Kitano H."/>
            <person name="Kollias G."/>
            <person name="Krishnan S.P."/>
            <person name="Kruger A."/>
            <person name="Kummerfeld S.K."/>
            <person name="Kurochkin I.V."/>
            <person name="Lareau L.F."/>
            <person name="Lazarevic D."/>
            <person name="Lipovich L."/>
            <person name="Liu J."/>
            <person name="Liuni S."/>
            <person name="McWilliam S."/>
            <person name="Madan Babu M."/>
            <person name="Madera M."/>
            <person name="Marchionni L."/>
            <person name="Matsuda H."/>
            <person name="Matsuzawa S."/>
            <person name="Miki H."/>
            <person name="Mignone F."/>
            <person name="Miyake S."/>
            <person name="Morris K."/>
            <person name="Mottagui-Tabar S."/>
            <person name="Mulder N."/>
            <person name="Nakano N."/>
            <person name="Nakauchi H."/>
            <person name="Ng P."/>
            <person name="Nilsson R."/>
            <person name="Nishiguchi S."/>
            <person name="Nishikawa S."/>
            <person name="Nori F."/>
            <person name="Ohara O."/>
            <person name="Okazaki Y."/>
            <person name="Orlando V."/>
            <person name="Pang K.C."/>
            <person name="Pavan W.J."/>
            <person name="Pavesi G."/>
            <person name="Pesole G."/>
            <person name="Petrovsky N."/>
            <person name="Piazza S."/>
            <person name="Reed J."/>
            <person name="Reid J.F."/>
            <person name="Ring B.Z."/>
            <person name="Ringwald M."/>
            <person name="Rost B."/>
            <person name="Ruan Y."/>
            <person name="Salzberg S.L."/>
            <person name="Sandelin A."/>
            <person name="Schneider C."/>
            <person name="Schoenbach C."/>
            <person name="Sekiguchi K."/>
            <person name="Semple C.A."/>
            <person name="Seno S."/>
            <person name="Sessa L."/>
            <person name="Sheng Y."/>
            <person name="Shibata Y."/>
            <person name="Shimada H."/>
            <person name="Shimada K."/>
            <person name="Silva D."/>
            <person name="Sinclair B."/>
            <person name="Sperling S."/>
            <person name="Stupka E."/>
            <person name="Sugiura K."/>
            <person name="Sultana R."/>
            <person name="Takenaka Y."/>
            <person name="Taki K."/>
            <person name="Tammoja K."/>
            <person name="Tan S.L."/>
            <person name="Tang S."/>
            <person name="Taylor M.S."/>
            <person name="Tegner J."/>
            <person name="Teichmann S.A."/>
            <person name="Ueda H.R."/>
            <person name="van Nimwegen E."/>
            <person name="Verardo R."/>
            <person name="Wei C.L."/>
            <person name="Yagi K."/>
            <person name="Yamanishi H."/>
            <person name="Zabarovsky E."/>
            <person name="Zhu S."/>
            <person name="Zimmer A."/>
            <person name="Hide W."/>
            <person name="Bult C."/>
            <person name="Grimmond S.M."/>
            <person name="Teasdale R.D."/>
            <person name="Liu E.T."/>
            <person name="Brusic V."/>
            <person name="Quackenbush J."/>
            <person name="Wahlestedt C."/>
            <person name="Mattick J.S."/>
            <person name="Hume D.A."/>
            <person name="Kai C."/>
            <person name="Sasaki D."/>
            <person name="Tomaru Y."/>
            <person name="Fukuda S."/>
            <person name="Kanamori-Katayama M."/>
            <person name="Suzuki M."/>
            <person name="Aoki J."/>
            <person name="Arakawa T."/>
            <person name="Iida J."/>
            <person name="Imamura K."/>
            <person name="Itoh M."/>
            <person name="Kato T."/>
            <person name="Kawaji H."/>
            <person name="Kawagashira N."/>
            <person name="Kawashima T."/>
            <person name="Kojima M."/>
            <person name="Kondo S."/>
            <person name="Konno H."/>
            <person name="Nakano K."/>
            <person name="Ninomiya N."/>
            <person name="Nishio T."/>
            <person name="Okada M."/>
            <person name="Plessy C."/>
            <person name="Shibata K."/>
            <person name="Shiraki T."/>
            <person name="Suzuki S."/>
            <person name="Tagami M."/>
            <person name="Waki K."/>
            <person name="Watahiki A."/>
            <person name="Okamura-Oho Y."/>
            <person name="Suzuki H."/>
            <person name="Kawai J."/>
            <person name="Hayashizaki Y."/>
        </authorList>
    </citation>
    <scope>NUCLEOTIDE SEQUENCE [LARGE SCALE MRNA]</scope>
    <source>
        <strain>C57BL/6J</strain>
        <tissue>Cerebellum</tissue>
        <tissue>Hippocampus</tissue>
    </source>
</reference>
<reference key="2">
    <citation type="journal article" date="2009" name="PLoS Biol.">
        <title>Lineage-specific biology revealed by a finished genome assembly of the mouse.</title>
        <authorList>
            <person name="Church D.M."/>
            <person name="Goodstadt L."/>
            <person name="Hillier L.W."/>
            <person name="Zody M.C."/>
            <person name="Goldstein S."/>
            <person name="She X."/>
            <person name="Bult C.J."/>
            <person name="Agarwala R."/>
            <person name="Cherry J.L."/>
            <person name="DiCuccio M."/>
            <person name="Hlavina W."/>
            <person name="Kapustin Y."/>
            <person name="Meric P."/>
            <person name="Maglott D."/>
            <person name="Birtle Z."/>
            <person name="Marques A.C."/>
            <person name="Graves T."/>
            <person name="Zhou S."/>
            <person name="Teague B."/>
            <person name="Potamousis K."/>
            <person name="Churas C."/>
            <person name="Place M."/>
            <person name="Herschleb J."/>
            <person name="Runnheim R."/>
            <person name="Forrest D."/>
            <person name="Amos-Landgraf J."/>
            <person name="Schwartz D.C."/>
            <person name="Cheng Z."/>
            <person name="Lindblad-Toh K."/>
            <person name="Eichler E.E."/>
            <person name="Ponting C.P."/>
        </authorList>
    </citation>
    <scope>NUCLEOTIDE SEQUENCE [LARGE SCALE GENOMIC DNA]</scope>
    <source>
        <strain>C57BL/6J</strain>
    </source>
</reference>
<reference key="3">
    <citation type="journal article" date="2004" name="Genome Res.">
        <title>The status, quality, and expansion of the NIH full-length cDNA project: the Mammalian Gene Collection (MGC).</title>
        <authorList>
            <consortium name="The MGC Project Team"/>
        </authorList>
    </citation>
    <scope>NUCLEOTIDE SEQUENCE [LARGE SCALE MRNA]</scope>
    <source>
        <strain>Czech II</strain>
        <tissue>Mammary tumor</tissue>
    </source>
</reference>
<reference key="4">
    <citation type="journal article" date="2007" name="Genome Res.">
        <title>Identification of novel peptide hormones in the human proteome by hidden Markov model screening.</title>
        <authorList>
            <person name="Mirabeau O."/>
            <person name="Perlas E."/>
            <person name="Severini C."/>
            <person name="Audero E."/>
            <person name="Gascuel O."/>
            <person name="Possenti R."/>
            <person name="Birney E."/>
            <person name="Rosenthal N."/>
            <person name="Gross C."/>
        </authorList>
    </citation>
    <scope>SUBCELLULAR LOCATION</scope>
    <scope>TISSUE SPECIFICITY</scope>
    <scope>DEVELOPMENTAL STAGE</scope>
    <scope>CLEAVAGE OF PROPEPTIDE AFTER ARG-70</scope>
</reference>
<reference key="5">
    <citation type="journal article" date="2010" name="Proc. Natl. Acad. Sci. U.S.A.">
        <title>Esophageal cancer-related gene 4 is a secreted inducer of cell senescence expressed by aged CNS precursor cells.</title>
        <authorList>
            <person name="Kujuro Y."/>
            <person name="Suzuki N."/>
            <person name="Kondo T."/>
        </authorList>
    </citation>
    <scope>FUNCTION</scope>
    <scope>SUBCELLULAR LOCATION</scope>
    <scope>DEVELOPMENTAL STAGE</scope>
</reference>
<reference key="6">
    <citation type="journal article" date="2011" name="Fluids Barriers CNS">
        <title>Ecrg4 expression and its product augurin in the choroid plexus: impact on fetal brain development, cerebrospinal fluid homeostasis and neuroprogenitor cell response to CNS injury.</title>
        <authorList>
            <person name="Gonzalez A.M."/>
            <person name="Podvin S."/>
            <person name="Lin S.Y."/>
            <person name="Miller M.C."/>
            <person name="Botfield H."/>
            <person name="Leadbeater W.E."/>
            <person name="Roberton A."/>
            <person name="Dang X."/>
            <person name="Knowling S.E."/>
            <person name="Cardenas-Galindo E."/>
            <person name="Donahue J.E."/>
            <person name="Stopa E.G."/>
            <person name="Johanson C.E."/>
            <person name="Coimbra R."/>
            <person name="Eliceiri B.P."/>
            <person name="Baird A."/>
        </authorList>
    </citation>
    <scope>TISSUE SPECIFICITY</scope>
    <scope>DEVELOPMENTAL STAGE</scope>
</reference>
<proteinExistence type="evidence at protein level"/>
<feature type="signal peptide" evidence="1">
    <location>
        <begin position="1"/>
        <end position="31"/>
    </location>
</feature>
<feature type="propeptide" id="PRO_0000363239" evidence="10">
    <location>
        <begin position="32"/>
        <end position="70"/>
    </location>
</feature>
<feature type="peptide" id="PRO_0000250515" description="Augurin">
    <location>
        <begin position="71"/>
        <end position="132"/>
    </location>
</feature>
<feature type="propeptide" id="PRO_0000363240" evidence="3">
    <location>
        <begin position="133"/>
        <end position="148"/>
    </location>
</feature>
<feature type="sequence conflict" description="In Ref. 1; AAH02254." evidence="9" ref="1">
    <original>N</original>
    <variation>D</variation>
    <location>
        <position position="146"/>
    </location>
</feature>
<protein>
    <recommendedName>
        <fullName evidence="9">Augurin</fullName>
    </recommendedName>
    <alternativeName>
        <fullName evidence="7 8">Esophageal cancer-related gene 4 protein homolog</fullName>
    </alternativeName>
</protein>
<organism>
    <name type="scientific">Mus musculus</name>
    <name type="common">Mouse</name>
    <dbReference type="NCBI Taxonomy" id="10090"/>
    <lineage>
        <taxon>Eukaryota</taxon>
        <taxon>Metazoa</taxon>
        <taxon>Chordata</taxon>
        <taxon>Craniata</taxon>
        <taxon>Vertebrata</taxon>
        <taxon>Euteleostomi</taxon>
        <taxon>Mammalia</taxon>
        <taxon>Eutheria</taxon>
        <taxon>Euarchontoglires</taxon>
        <taxon>Glires</taxon>
        <taxon>Rodentia</taxon>
        <taxon>Myomorpha</taxon>
        <taxon>Muroidea</taxon>
        <taxon>Muridae</taxon>
        <taxon>Murinae</taxon>
        <taxon>Mus</taxon>
        <taxon>Mus</taxon>
    </lineage>
</organism>
<sequence>MSTSSARPAVLALAGLALLLLLCLGPDGISGNKLKKMLQKREGPVPSKTNVAVAENTAKEFLGGLKRAKRQLWDRTRPEVQQWYQQFLYMGFDEAKFEDDVNYWLNRNRNGHDYYGDYYQRHYDEDAAIGPHSRESFRHGASVNYNDY</sequence>
<gene>
    <name evidence="7 8" type="primary">Ecrg4</name>
</gene>
<evidence type="ECO:0000250" key="1">
    <source>
        <dbReference type="UniProtKB" id="D4A540"/>
    </source>
</evidence>
<evidence type="ECO:0000250" key="2">
    <source>
        <dbReference type="UniProtKB" id="Q9H1Z8"/>
    </source>
</evidence>
<evidence type="ECO:0000255" key="3"/>
<evidence type="ECO:0000269" key="4">
    <source>
    </source>
</evidence>
<evidence type="ECO:0000269" key="5">
    <source>
    </source>
</evidence>
<evidence type="ECO:0000269" key="6">
    <source>
    </source>
</evidence>
<evidence type="ECO:0000303" key="7">
    <source>
    </source>
</evidence>
<evidence type="ECO:0000303" key="8">
    <source>
    </source>
</evidence>
<evidence type="ECO:0000305" key="9"/>
<evidence type="ECO:0000305" key="10">
    <source>
    </source>
</evidence>
<accession>Q99LS0</accession>
<accession>Q9D2U7</accession>
<comment type="function">
    <text evidence="5">Probable hormone that may attenuate cell proliferation and induce senescence of oligodendrocyte and neural precursor cells in the central nervous system (PubMed:20404145). ECRG4-induced senescence is characterized by G1 arrest, RB1 dephosphorylation and accelerated CCND1 and CCND3 proteasomal degradation (PubMed:20404145).</text>
</comment>
<comment type="subcellular location">
    <subcellularLocation>
        <location evidence="4 5">Secreted</location>
    </subcellularLocation>
    <subcellularLocation>
        <location evidence="2">Cytoplasm</location>
    </subcellularLocation>
    <subcellularLocation>
        <location evidence="2">Apical cell membrane</location>
    </subcellularLocation>
</comment>
<comment type="tissue specificity">
    <text evidence="4 6">Expressed in the intermediate lobe of pituitary, glomerular layer of adrenal cortex, choroid plexus and atrioventricular node of the heart (PubMed:17284679). Expressed in the brain with high expression in the choroid plexus and the epithelial lining of the central canal and expression in the gray matter of the spinal cord (at protein level) (PubMed:21349154).</text>
</comment>
<comment type="developmental stage">
    <text evidence="4 5 6">At embryonic stage 14.5 dpc, primarily expressed in the choroid plexus, and low expression in the heart and cartilage (at protein level) (PubMed:21349154). At 18.5 dpc, expressed in adrenal cortex, choroid plexus and bone (PubMed:17284679). Low expression in the brain of young, 2-month-old animals, except for the mitral cell layer of the olfactory bulb (PubMed:20404145). Strongly expressed in the brains of aged, 15- to 21-month-old mice with expression in the subgranular zone of the dentate gyrus and in the corpus callosum (at protein level) (PubMed:20404145). Also expressed in the CA1-3 regions of the hippocampus, as well as in the cerebellum, brainstem and cortex (PubMed:20404145). In vitro, up-regulated in senescent cells, including embryonic fibroblasts and oligodendrocyte precursor cells (PubMed:20404145).</text>
</comment>
<comment type="similarity">
    <text evidence="9">Belongs to the augurin family.</text>
</comment>
<dbReference type="EMBL" id="AK018770">
    <property type="protein sequence ID" value="BAB31398.1"/>
    <property type="molecule type" value="mRNA"/>
</dbReference>
<dbReference type="EMBL" id="AK049805">
    <property type="protein sequence ID" value="BAE20668.1"/>
    <property type="molecule type" value="mRNA"/>
</dbReference>
<dbReference type="EMBL" id="AC159092">
    <property type="status" value="NOT_ANNOTATED_CDS"/>
    <property type="molecule type" value="Genomic_DNA"/>
</dbReference>
<dbReference type="EMBL" id="BC002254">
    <property type="protein sequence ID" value="AAH02254.1"/>
    <property type="molecule type" value="mRNA"/>
</dbReference>
<dbReference type="CCDS" id="CCDS14925.1"/>
<dbReference type="RefSeq" id="NP_077245.2">
    <property type="nucleotide sequence ID" value="NM_024283.3"/>
</dbReference>
<dbReference type="SMR" id="Q99LS0"/>
<dbReference type="FunCoup" id="Q99LS0">
    <property type="interactions" value="94"/>
</dbReference>
<dbReference type="STRING" id="10090.ENSMUSP00000027217"/>
<dbReference type="PhosphoSitePlus" id="Q99LS0"/>
<dbReference type="PaxDb" id="10090-ENSMUSP00000027217"/>
<dbReference type="ProteomicsDB" id="277136"/>
<dbReference type="Antibodypedia" id="2376">
    <property type="antibodies" value="222 antibodies from 28 providers"/>
</dbReference>
<dbReference type="DNASU" id="78896"/>
<dbReference type="Ensembl" id="ENSMUST00000027217.9">
    <property type="protein sequence ID" value="ENSMUSP00000027217.9"/>
    <property type="gene ID" value="ENSMUSG00000026051.9"/>
</dbReference>
<dbReference type="GeneID" id="78896"/>
<dbReference type="KEGG" id="mmu:78896"/>
<dbReference type="UCSC" id="uc007avp.2">
    <property type="organism name" value="mouse"/>
</dbReference>
<dbReference type="AGR" id="MGI:1926146"/>
<dbReference type="CTD" id="84417"/>
<dbReference type="MGI" id="MGI:1926146">
    <property type="gene designation" value="Ecrg4"/>
</dbReference>
<dbReference type="VEuPathDB" id="HostDB:ENSMUSG00000026051"/>
<dbReference type="eggNOG" id="ENOG502RZPP">
    <property type="taxonomic scope" value="Eukaryota"/>
</dbReference>
<dbReference type="GeneTree" id="ENSGT00390000000145"/>
<dbReference type="HOGENOM" id="CLU_153579_0_0_1"/>
<dbReference type="InParanoid" id="Q99LS0"/>
<dbReference type="OMA" id="WLNRGRN"/>
<dbReference type="OrthoDB" id="8915498at2759"/>
<dbReference type="TreeFam" id="TF336161"/>
<dbReference type="BioGRID-ORCS" id="78896">
    <property type="hits" value="1 hit in 77 CRISPR screens"/>
</dbReference>
<dbReference type="ChiTaRS" id="1500015O10Rik">
    <property type="organism name" value="mouse"/>
</dbReference>
<dbReference type="PRO" id="PR:Q99LS0"/>
<dbReference type="Proteomes" id="UP000000589">
    <property type="component" value="Chromosome 1"/>
</dbReference>
<dbReference type="RNAct" id="Q99LS0">
    <property type="molecule type" value="protein"/>
</dbReference>
<dbReference type="Bgee" id="ENSMUSG00000026051">
    <property type="expression patterns" value="Expressed in epithelium of cochlear duct and 134 other cell types or tissues"/>
</dbReference>
<dbReference type="GO" id="GO:0016324">
    <property type="term" value="C:apical plasma membrane"/>
    <property type="evidence" value="ECO:0007669"/>
    <property type="project" value="UniProtKB-SubCell"/>
</dbReference>
<dbReference type="GO" id="GO:0031045">
    <property type="term" value="C:dense core granule"/>
    <property type="evidence" value="ECO:0000250"/>
    <property type="project" value="UniProtKB"/>
</dbReference>
<dbReference type="GO" id="GO:0005615">
    <property type="term" value="C:extracellular space"/>
    <property type="evidence" value="ECO:0000314"/>
    <property type="project" value="MGI"/>
</dbReference>
<dbReference type="GO" id="GO:0031145">
    <property type="term" value="P:anaphase-promoting complex-dependent catabolic process"/>
    <property type="evidence" value="ECO:0000314"/>
    <property type="project" value="MGI"/>
</dbReference>
<dbReference type="GO" id="GO:0090398">
    <property type="term" value="P:cellular senescence"/>
    <property type="evidence" value="ECO:0000314"/>
    <property type="project" value="MGI"/>
</dbReference>
<dbReference type="GO" id="GO:0070314">
    <property type="term" value="P:G1 to G0 transition"/>
    <property type="evidence" value="ECO:0000314"/>
    <property type="project" value="MGI"/>
</dbReference>
<dbReference type="InterPro" id="IPR028173">
    <property type="entry name" value="Augurin"/>
</dbReference>
<dbReference type="PANTHER" id="PTHR31613">
    <property type="entry name" value="AUGURIN"/>
    <property type="match status" value="1"/>
</dbReference>
<dbReference type="PANTHER" id="PTHR31613:SF2">
    <property type="entry name" value="AUGURIN"/>
    <property type="match status" value="1"/>
</dbReference>
<dbReference type="Pfam" id="PF15187">
    <property type="entry name" value="Augurin"/>
    <property type="match status" value="1"/>
</dbReference>